<sequence length="336" mass="36832">MPLPTRKIGQSLVSEIGFGSMGIARLGPSGFYGVVESDDERFKVLDAAHAAGCTFWDSAHLYGDSEELIGKWLKRTGKRNDIFLATKFGITPQGVRGDPDFVKEQCATSLERLGVDCIDLFYQHRVDPKTPIEITVGAMAELVKEGKVKYLGLSECSAKALRRAHAVHPIAALQIEYSPFVLDIEDPKIALLETARELGVTIVAYSPLGRGLLTGQYKSPDDFEPNDFRRTIPKFSADNFPKILDVVAQLKKIGEKHNATPGQVTLAWILAQGPEFIVIPGTKKIKYLEENVGAASIKLTEEEVAAVRKLAEESEIPGDRNARMGAMLIDSPELPQ</sequence>
<comment type="function">
    <text evidence="3 10">Aldo-keto reductase; part of the gene cluster that mediates the biosynthesis of strobilurin A, an antifungal polyketide that contains a key beta-methoxyacrylate toxophore that targets the complex III of the mitochondrial electron transport chain (PubMed:30258052). Strobilurin biosynthesis begins with construction of benzoyl CoA by step-wise elimination of ammonia from phenylalanine by the phenylalanine ammonia-lyase str11, oxygenation by str8 and retro-Claisen reaction to form benzoic acid, which is activated to its CoA thiolester benzoyl CoA by the dedicated CoA ligase str10 (PubMed:30258052). Benzoyl CoA forms the starter unit for the highly reducing polyketide synthase stpks1 that produces the polyketide prestrobilutin A (PubMed:30258052). The FAD-dependent oxygenase str9 then catalyzes the key oxidative rearrangement responsible for the creation of the beta-methoxyacrylate toxophore (PubMed:30258052). Str9 performs epoxidation of the 2,3 olefin of prestrobilutin A, followed by Meinwald rearrangement to furnish the aldehyde intermediate (Probable). Rapid enolization of the aldehyde intermediate would give the beta-methoxyacrylate skeleton and methylations catalyzed by str2 and str3 complete the synthesis and lead to the production of strobilurin A (Probable). The short-chain dehydrogenase stl2 and the dehydrogenase str4 play a role in the shunt pathway leading to the production of bolineol (PubMed:30258052). The cluster encodes no obvious halogenase gene that could be involved in production of strobilurin B, nor any obvious dimethylallyl-transferase that could be involved in the production of strobilurin G (Probable). It is possible that unknown proteins encoded in, or near, the cluster (such as str1 or stl1) may form new classes of halogenases or dimethylally-transferases, or that the responsible genes are located elsewhere on the genome (Probable). Similarly, proteins encoded by str5/str6 hydrolases appear to have no chemical role in the biosynthesis of strobilurin A (Probable). Finally, no obvious self-resistance gene is found within the cluster (Probable).</text>
</comment>
<comment type="pathway">
    <text evidence="10">Mycotoxin biosynthesis.</text>
</comment>
<comment type="induction">
    <text evidence="3">Induced in strobilurin-producing conditions (on CGC medium after 6 days of growth).</text>
</comment>
<comment type="biotechnology">
    <text evidence="4 5 6 7 8">The structure of strobilurin A was used for the development of the major class of beta-methoxyacrylate agricultural fungicides since its beta-methoxyacrylate toxophore targets the Qo site of complex III of the mitochondrial electron transport chain and prevents adenosine triphosphate synthesis (PubMed:563391, PubMed:6271595). Compounds such as azoxystrobin (Syngenta) and Kresoxim methyl (BASF) are among the most widely used fungicides worldwide (PubMed:12146165, PubMed:29711574). This class of antifungals are used as effective treatments against a broad range of destructive fungal plant pathogens and make significant contributions to food security (PubMed:12146165, PubMed:29711574). The strobilurin fungicides are estimated to have been worth 3.4 billion dollars in 2015 and they make up 25% of the fungicide market and 6.7% of the total crop protection market (PubMed:30258052).</text>
</comment>
<comment type="similarity">
    <text evidence="9">Belongs to the aldo/keto reductase family. Aldo/keto reductase 2 subfamily.</text>
</comment>
<dbReference type="EC" id="1.1.1.-" evidence="10"/>
<dbReference type="EMBL" id="KY070339">
    <property type="protein sequence ID" value="ATV82117.1"/>
    <property type="molecule type" value="Genomic_DNA"/>
</dbReference>
<dbReference type="SMR" id="A0A3B1EFQ1"/>
<dbReference type="GO" id="GO:0005737">
    <property type="term" value="C:cytoplasm"/>
    <property type="evidence" value="ECO:0007669"/>
    <property type="project" value="TreeGrafter"/>
</dbReference>
<dbReference type="GO" id="GO:0004033">
    <property type="term" value="F:aldo-keto reductase (NADPH) activity"/>
    <property type="evidence" value="ECO:0007669"/>
    <property type="project" value="TreeGrafter"/>
</dbReference>
<dbReference type="Gene3D" id="3.20.20.100">
    <property type="entry name" value="NADP-dependent oxidoreductase domain"/>
    <property type="match status" value="1"/>
</dbReference>
<dbReference type="InterPro" id="IPR020471">
    <property type="entry name" value="AKR"/>
</dbReference>
<dbReference type="InterPro" id="IPR050791">
    <property type="entry name" value="Aldo-Keto_reductase"/>
</dbReference>
<dbReference type="InterPro" id="IPR023210">
    <property type="entry name" value="NADP_OxRdtase_dom"/>
</dbReference>
<dbReference type="InterPro" id="IPR036812">
    <property type="entry name" value="NADP_OxRdtase_dom_sf"/>
</dbReference>
<dbReference type="PANTHER" id="PTHR43625">
    <property type="entry name" value="AFLATOXIN B1 ALDEHYDE REDUCTASE"/>
    <property type="match status" value="1"/>
</dbReference>
<dbReference type="PANTHER" id="PTHR43625:SF40">
    <property type="entry name" value="ALDO-KETO REDUCTASE YAKC [NADP(+)]"/>
    <property type="match status" value="1"/>
</dbReference>
<dbReference type="Pfam" id="PF00248">
    <property type="entry name" value="Aldo_ket_red"/>
    <property type="match status" value="1"/>
</dbReference>
<dbReference type="PRINTS" id="PR00069">
    <property type="entry name" value="ALDKETRDTASE"/>
</dbReference>
<dbReference type="SUPFAM" id="SSF51430">
    <property type="entry name" value="NAD(P)-linked oxidoreductase"/>
    <property type="match status" value="1"/>
</dbReference>
<feature type="chain" id="PRO_0000449344" description="Aldo-keto reductase str7">
    <location>
        <begin position="1"/>
        <end position="336"/>
    </location>
</feature>
<feature type="active site" description="Proton donor" evidence="2">
    <location>
        <position position="62"/>
    </location>
</feature>
<feature type="binding site" evidence="1">
    <location>
        <position position="57"/>
    </location>
    <ligand>
        <name>NADP(+)</name>
        <dbReference type="ChEBI" id="CHEBI:58349"/>
    </ligand>
</feature>
<feature type="binding site" evidence="2">
    <location>
        <position position="124"/>
    </location>
    <ligand>
        <name>substrate</name>
    </ligand>
</feature>
<feature type="binding site" evidence="1">
    <location>
        <begin position="154"/>
        <end position="155"/>
    </location>
    <ligand>
        <name>NADP(+)</name>
        <dbReference type="ChEBI" id="CHEBI:58349"/>
    </ligand>
</feature>
<feature type="binding site" evidence="1">
    <location>
        <position position="174"/>
    </location>
    <ligand>
        <name>NADP(+)</name>
        <dbReference type="ChEBI" id="CHEBI:58349"/>
    </ligand>
</feature>
<feature type="binding site" evidence="1">
    <location>
        <begin position="206"/>
        <end position="220"/>
    </location>
    <ligand>
        <name>NADP(+)</name>
        <dbReference type="ChEBI" id="CHEBI:58349"/>
    </ligand>
</feature>
<feature type="binding site" evidence="1">
    <location>
        <begin position="283"/>
        <end position="291"/>
    </location>
    <ligand>
        <name>NADP(+)</name>
        <dbReference type="ChEBI" id="CHEBI:58349"/>
    </ligand>
</feature>
<evidence type="ECO:0000250" key="1">
    <source>
        <dbReference type="UniProtKB" id="O43488"/>
    </source>
</evidence>
<evidence type="ECO:0000250" key="2">
    <source>
        <dbReference type="UniProtKB" id="Q8CG76"/>
    </source>
</evidence>
<evidence type="ECO:0000269" key="3">
    <source>
    </source>
</evidence>
<evidence type="ECO:0000269" key="4">
    <source>
    </source>
</evidence>
<evidence type="ECO:0000269" key="5">
    <source>
    </source>
</evidence>
<evidence type="ECO:0000303" key="6">
    <source>
    </source>
</evidence>
<evidence type="ECO:0000303" key="7">
    <source>
    </source>
</evidence>
<evidence type="ECO:0000303" key="8">
    <source>
    </source>
</evidence>
<evidence type="ECO:0000305" key="9"/>
<evidence type="ECO:0000305" key="10">
    <source>
    </source>
</evidence>
<protein>
    <recommendedName>
        <fullName evidence="8">Aldo-keto reductase str7</fullName>
        <ecNumber evidence="10">1.1.1.-</ecNumber>
    </recommendedName>
    <alternativeName>
        <fullName evidence="8">Strobilurin A biosynthesis cluster protein r7</fullName>
    </alternativeName>
</protein>
<organism>
    <name type="scientific">Strobilurus tenacellus</name>
    <dbReference type="NCBI Taxonomy" id="41251"/>
    <lineage>
        <taxon>Eukaryota</taxon>
        <taxon>Fungi</taxon>
        <taxon>Dikarya</taxon>
        <taxon>Basidiomycota</taxon>
        <taxon>Agaricomycotina</taxon>
        <taxon>Agaricomycetes</taxon>
        <taxon>Agaricomycetidae</taxon>
        <taxon>Agaricales</taxon>
        <taxon>Marasmiineae</taxon>
        <taxon>Physalacriaceae</taxon>
        <taxon>Strobilurus</taxon>
    </lineage>
</organism>
<gene>
    <name evidence="8" type="primary">str7</name>
</gene>
<keyword id="KW-0521">NADP</keyword>
<keyword id="KW-0560">Oxidoreductase</keyword>
<reference key="1">
    <citation type="journal article" date="2018" name="Nat. Commun.">
        <title>Strobilurin biosynthesis in Basidiomycete fungi.</title>
        <authorList>
            <person name="Nofiani R."/>
            <person name="de Mattos-Shipley K."/>
            <person name="Lebe K.E."/>
            <person name="Han L.C."/>
            <person name="Iqbal Z."/>
            <person name="Bailey A.M."/>
            <person name="Willis C.L."/>
            <person name="Simpson T.J."/>
            <person name="Cox R.J."/>
        </authorList>
    </citation>
    <scope>NUCLEOTIDE SEQUENCE [GENOMIC DNA]</scope>
    <scope>INDUCTION</scope>
    <scope>FUNCTION</scope>
    <scope>BIOTECHNOLOGY</scope>
    <source>
        <strain>CBS 621.79</strain>
    </source>
</reference>
<reference key="2">
    <citation type="journal article" date="1977" name="J. Antibiot.">
        <title>The strobilurins--new antifungal antibiotics from the basidiomycete Strobilurus tenacellus.</title>
        <authorList>
            <person name="Anke T."/>
            <person name="Oberwinkler F."/>
            <person name="Steglich W."/>
            <person name="Schramm G."/>
        </authorList>
    </citation>
    <scope>BIOTECHNOLOGY</scope>
</reference>
<reference key="3">
    <citation type="journal article" date="1981" name="FEBS Lett.">
        <title>Oudemansin, strobilurin A, strobilurin B and myxothiazol: new inhibitors of the bc1 segment of the respiratory chain with an E-beta-methoxyacrylate system as common structural element.</title>
        <authorList>
            <person name="Becker W.F."/>
            <person name="von Jagow G."/>
            <person name="Anke T."/>
            <person name="Steglich W."/>
        </authorList>
    </citation>
    <scope>BIOTECHNOLOGY</scope>
</reference>
<reference key="4">
    <citation type="journal article" date="1999" name="Angew. Chem. Int. Ed.">
        <title>Strobilurins: evolution of a new class of active substances.</title>
        <authorList>
            <person name="Sauter H."/>
            <person name="Steglich W."/>
            <person name="Anke T."/>
        </authorList>
    </citation>
    <scope>REVIEW ON BIOTECHNOLOGY</scope>
</reference>
<reference key="5">
    <citation type="journal article" date="2002" name="Pest Manag. Sci.">
        <title>The strobilurin fungicides.</title>
        <authorList>
            <person name="Bartlett D.W."/>
            <person name="Clough J.M."/>
            <person name="Godwin J.R."/>
            <person name="Hall A.A."/>
            <person name="Hamer M."/>
            <person name="Parr-Dobrzanski B."/>
        </authorList>
    </citation>
    <scope>REVIEW ON BIOTECHNOLOGY</scope>
</reference>
<proteinExistence type="evidence at protein level"/>
<accession>A0A3B1EFQ1</accession>
<name>STR7_STRTC</name>